<reference evidence="9" key="1">
    <citation type="journal article" date="2008" name="J. Biol. Chem.">
        <title>The new beta-D-glucosidase in terpenoid-isoquinoline alkaloid biosynthesis in Psychotria ipecacuanha.</title>
        <authorList>
            <person name="Nomura T."/>
            <person name="Quesada A.L."/>
            <person name="Kutchan T.M."/>
        </authorList>
    </citation>
    <scope>NUCLEOTIDE SEQUENCE [MRNA]</scope>
    <scope>FUNCTION</scope>
    <scope>CATALYTIC ACTIVITY</scope>
    <scope>PATHWAY</scope>
    <source>
        <tissue>Root</tissue>
        <tissue>Shoot</tissue>
    </source>
</reference>
<comment type="function">
    <text evidence="6">Beta-glucosidase catalyzing deglucosylation on N-deacetylisoipecoside and N-deacetylipecoside.</text>
</comment>
<comment type="catalytic activity">
    <reaction evidence="6">
        <text>deacetylipecoside + H2O = deacetylipecoside aglycone + D-glucose</text>
        <dbReference type="Rhea" id="RHEA:78763"/>
        <dbReference type="ChEBI" id="CHEBI:4167"/>
        <dbReference type="ChEBI" id="CHEBI:15377"/>
        <dbReference type="ChEBI" id="CHEBI:58379"/>
        <dbReference type="ChEBI" id="CHEBI:229554"/>
    </reaction>
    <physiologicalReaction direction="left-to-right" evidence="6">
        <dbReference type="Rhea" id="RHEA:78764"/>
    </physiologicalReaction>
</comment>
<comment type="catalytic activity">
    <reaction evidence="6">
        <text>deacetylisoipecoside + H2O = deacetylisoipecoside aglycone + D-glucose</text>
        <dbReference type="Rhea" id="RHEA:78887"/>
        <dbReference type="ChEBI" id="CHEBI:4167"/>
        <dbReference type="ChEBI" id="CHEBI:15377"/>
        <dbReference type="ChEBI" id="CHEBI:58091"/>
        <dbReference type="ChEBI" id="CHEBI:229557"/>
    </reaction>
    <physiologicalReaction direction="left-to-right" evidence="6">
        <dbReference type="Rhea" id="RHEA:78888"/>
    </physiologicalReaction>
</comment>
<comment type="pathway">
    <text evidence="6">Alkaloid biosynthesis.</text>
</comment>
<comment type="subcellular location">
    <subcellularLocation>
        <location evidence="1">Cytoplasm</location>
        <location evidence="1">Cytosol</location>
    </subcellularLocation>
</comment>
<comment type="similarity">
    <text evidence="8">Belongs to the glycosyl hydrolase 1 family.</text>
</comment>
<name>GLU2_CARIP</name>
<dbReference type="EC" id="3.2.1.-" evidence="6"/>
<dbReference type="EMBL" id="AB455577">
    <property type="protein sequence ID" value="BAH02545.1"/>
    <property type="molecule type" value="mRNA"/>
</dbReference>
<dbReference type="CAZy" id="GH1">
    <property type="family name" value="Glycoside Hydrolase Family 1"/>
</dbReference>
<dbReference type="GO" id="GO:0005829">
    <property type="term" value="C:cytosol"/>
    <property type="evidence" value="ECO:0000250"/>
    <property type="project" value="UniProtKB"/>
</dbReference>
<dbReference type="GO" id="GO:0008422">
    <property type="term" value="F:beta-glucosidase activity"/>
    <property type="evidence" value="ECO:0000314"/>
    <property type="project" value="UniProtKB"/>
</dbReference>
<dbReference type="GO" id="GO:0009251">
    <property type="term" value="P:glucan catabolic process"/>
    <property type="evidence" value="ECO:0000314"/>
    <property type="project" value="UniProtKB"/>
</dbReference>
<dbReference type="GO" id="GO:0033075">
    <property type="term" value="P:isoquinoline alkaloid biosynthetic process"/>
    <property type="evidence" value="ECO:0000314"/>
    <property type="project" value="UniProtKB"/>
</dbReference>
<dbReference type="FunFam" id="3.20.20.80:FF:000022">
    <property type="entry name" value="Beta-glucosidase 11"/>
    <property type="match status" value="1"/>
</dbReference>
<dbReference type="Gene3D" id="3.20.20.80">
    <property type="entry name" value="Glycosidases"/>
    <property type="match status" value="1"/>
</dbReference>
<dbReference type="InterPro" id="IPR001360">
    <property type="entry name" value="Glyco_hydro_1"/>
</dbReference>
<dbReference type="InterPro" id="IPR033132">
    <property type="entry name" value="Glyco_hydro_1_N_CS"/>
</dbReference>
<dbReference type="InterPro" id="IPR017853">
    <property type="entry name" value="Glycoside_hydrolase_SF"/>
</dbReference>
<dbReference type="PANTHER" id="PTHR10353">
    <property type="entry name" value="GLYCOSYL HYDROLASE"/>
    <property type="match status" value="1"/>
</dbReference>
<dbReference type="PANTHER" id="PTHR10353:SF137">
    <property type="entry name" value="MYROSINASE 3-RELATED"/>
    <property type="match status" value="1"/>
</dbReference>
<dbReference type="Pfam" id="PF00232">
    <property type="entry name" value="Glyco_hydro_1"/>
    <property type="match status" value="2"/>
</dbReference>
<dbReference type="PRINTS" id="PR00131">
    <property type="entry name" value="GLHYDRLASE1"/>
</dbReference>
<dbReference type="SUPFAM" id="SSF51445">
    <property type="entry name" value="(Trans)glycosidases"/>
    <property type="match status" value="1"/>
</dbReference>
<dbReference type="PROSITE" id="PS00653">
    <property type="entry name" value="GLYCOSYL_HYDROL_F1_2"/>
    <property type="match status" value="1"/>
</dbReference>
<evidence type="ECO:0000250" key="1">
    <source>
        <dbReference type="UniProtKB" id="B6ZKM3"/>
    </source>
</evidence>
<evidence type="ECO:0000250" key="2">
    <source>
        <dbReference type="UniProtKB" id="Q1XH05"/>
    </source>
</evidence>
<evidence type="ECO:0000250" key="3">
    <source>
        <dbReference type="UniProtKB" id="Q7XSK0"/>
    </source>
</evidence>
<evidence type="ECO:0000250" key="4">
    <source>
        <dbReference type="UniProtKB" id="Q8L7J2"/>
    </source>
</evidence>
<evidence type="ECO:0000250" key="5">
    <source>
        <dbReference type="UniProtKB" id="Q9SPP9"/>
    </source>
</evidence>
<evidence type="ECO:0000269" key="6">
    <source>
    </source>
</evidence>
<evidence type="ECO:0000303" key="7">
    <source>
    </source>
</evidence>
<evidence type="ECO:0000305" key="8"/>
<evidence type="ECO:0000312" key="9">
    <source>
        <dbReference type="EMBL" id="BAH02545.1"/>
    </source>
</evidence>
<protein>
    <recommendedName>
        <fullName evidence="7">Ipecac alkaloid beta-glucosidase 2</fullName>
        <shortName evidence="7">IpeGLU2</shortName>
        <ecNumber evidence="6">3.2.1.-</ecNumber>
    </recommendedName>
</protein>
<accession>B6ZKM4</accession>
<proteinExistence type="evidence at protein level"/>
<feature type="chain" id="PRO_0000462223" description="Ipecac alkaloid beta-glucosidase 2">
    <location>
        <begin position="1"/>
        <end position="543"/>
    </location>
</feature>
<feature type="active site" description="Proton donor" evidence="3">
    <location>
        <position position="186"/>
    </location>
</feature>
<feature type="active site" description="Nucleophile" evidence="3">
    <location>
        <position position="422"/>
    </location>
</feature>
<feature type="binding site" evidence="5">
    <location>
        <position position="36"/>
    </location>
    <ligand>
        <name>a beta-D-glucoside</name>
        <dbReference type="ChEBI" id="CHEBI:22798"/>
    </ligand>
</feature>
<feature type="binding site" evidence="5">
    <location>
        <position position="140"/>
    </location>
    <ligand>
        <name>a beta-D-glucoside</name>
        <dbReference type="ChEBI" id="CHEBI:22798"/>
    </ligand>
</feature>
<feature type="binding site" evidence="5">
    <location>
        <begin position="185"/>
        <end position="186"/>
    </location>
    <ligand>
        <name>a beta-D-glucoside</name>
        <dbReference type="ChEBI" id="CHEBI:22798"/>
    </ligand>
</feature>
<feature type="binding site" evidence="4">
    <location>
        <position position="350"/>
    </location>
    <ligand>
        <name>a beta-D-glucoside</name>
        <dbReference type="ChEBI" id="CHEBI:22798"/>
    </ligand>
</feature>
<feature type="binding site" evidence="5">
    <location>
        <position position="422"/>
    </location>
    <ligand>
        <name>a beta-D-glucoside</name>
        <dbReference type="ChEBI" id="CHEBI:22798"/>
    </ligand>
</feature>
<feature type="binding site" evidence="5">
    <location>
        <position position="471"/>
    </location>
    <ligand>
        <name>a beta-D-glucoside</name>
        <dbReference type="ChEBI" id="CHEBI:22798"/>
    </ligand>
</feature>
<feature type="binding site" evidence="2">
    <location>
        <position position="487"/>
    </location>
    <ligand>
        <name>a beta-D-glucoside</name>
        <dbReference type="ChEBI" id="CHEBI:22798"/>
    </ligand>
</feature>
<feature type="site" description="Controls the gate shape and acceptance of substrates" evidence="5">
    <location>
        <position position="394"/>
    </location>
</feature>
<sequence length="543" mass="61790">MSSVLPTPVLPTPGRNINRGHFPDDFIFGAGTSSYQIEGAAREGGRGPSIWDTFTHTHPELIQDGSNGDTAINSYNLYKEDIKIVKLMGLDAYRFSISWPRILPGGSINAGINQEGIKYYNNLIDELLANDIVPYVTLFHWDVPQALQDQYDGFLSDKIVDDFRDFAELCFWEFGDRVKNWITINEPESYSNFFGVAYDTPPKAHALKASRLLVPTTVARPSKPVRVFASTADPGTTTADQVYKVGHNLLLAHAAAIQVYRDKFQNTQEGTFGMALVTQWMKPLNENNPADVEAASRAFDFKFGWFMQPLITGEYPKSMRQLLGPRLREFTPDQKKLLIGSYDYVGVNYYTATYVSSAQPPHDKKKAVFHTDGNFYTTDSKDGVLIGPLAGPAWLNIVPEGIYHVLHDIKENYEDPVIYITENGVYEVNDTAKTLSEARVDTTRLHYLQDHLSKVLEARHQGVRVQGYLVWSLMDNWELRAGYTSRFGLIHVDYYNNFARYPKDSAIWFRNAFHKRLRIHVNKARPQEDDGAFDTPRKRLRKY</sequence>
<organism>
    <name type="scientific">Carapichea ipecacuanha</name>
    <name type="common">Ipecac</name>
    <name type="synonym">Callicocca ipecacuanha</name>
    <dbReference type="NCBI Taxonomy" id="77880"/>
    <lineage>
        <taxon>Eukaryota</taxon>
        <taxon>Viridiplantae</taxon>
        <taxon>Streptophyta</taxon>
        <taxon>Embryophyta</taxon>
        <taxon>Tracheophyta</taxon>
        <taxon>Spermatophyta</taxon>
        <taxon>Magnoliopsida</taxon>
        <taxon>eudicotyledons</taxon>
        <taxon>Gunneridae</taxon>
        <taxon>Pentapetalae</taxon>
        <taxon>asterids</taxon>
        <taxon>lamiids</taxon>
        <taxon>Gentianales</taxon>
        <taxon>Rubiaceae</taxon>
        <taxon>Rubioideae</taxon>
        <taxon>Palicoureeae</taxon>
        <taxon>Carapichea</taxon>
    </lineage>
</organism>
<keyword id="KW-0017">Alkaloid metabolism</keyword>
<keyword id="KW-0963">Cytoplasm</keyword>
<keyword id="KW-0326">Glycosidase</keyword>
<keyword id="KW-0378">Hydrolase</keyword>
<gene>
    <name evidence="7" type="primary">GLU2</name>
</gene>